<sequence length="283" mass="31797">MPKVSSVIVPYAAYLRVYEPLAAFPDEERAHWTRYARRPGRPSYQDELRRSLADLLPTPPVAVPVHESADAFVTEVDGVVCVCPWRTRLRGWQALGEVAEDFPEPVLDALIPPVVRRQSAQDYERWLERNPDARPWIRTATWQVPINWFVLVSDAEREYDEGGGDEAATAPVLRYRTPMVQARRRVARGLRALREAVDEGPLIDGLVDVGRWLEEFHPRSLVELDYGGLVHALPAGELEADHSAADVAEGIEALRHGDGVAAGAAYGRLVERWRAVRDRRSAN</sequence>
<reference key="1">
    <citation type="journal article" date="1993" name="J. Bacteriol.">
        <title>Sequence, transcriptional, and functional analyses of the valine (branched-chain amino acid) dehydrogenase gene of Streptomyces coelicolor.</title>
        <authorList>
            <person name="Tang L."/>
            <person name="Hutchinson C.R."/>
        </authorList>
    </citation>
    <scope>NUCLEOTIDE SEQUENCE [GENOMIC DNA]</scope>
    <source>
        <strain>A3(2) / J802</strain>
    </source>
</reference>
<reference key="2">
    <citation type="journal article" date="2002" name="Nature">
        <title>Complete genome sequence of the model actinomycete Streptomyces coelicolor A3(2).</title>
        <authorList>
            <person name="Bentley S.D."/>
            <person name="Chater K.F."/>
            <person name="Cerdeno-Tarraga A.-M."/>
            <person name="Challis G.L."/>
            <person name="Thomson N.R."/>
            <person name="James K.D."/>
            <person name="Harris D.E."/>
            <person name="Quail M.A."/>
            <person name="Kieser H."/>
            <person name="Harper D."/>
            <person name="Bateman A."/>
            <person name="Brown S."/>
            <person name="Chandra G."/>
            <person name="Chen C.W."/>
            <person name="Collins M."/>
            <person name="Cronin A."/>
            <person name="Fraser A."/>
            <person name="Goble A."/>
            <person name="Hidalgo J."/>
            <person name="Hornsby T."/>
            <person name="Howarth S."/>
            <person name="Huang C.-H."/>
            <person name="Kieser T."/>
            <person name="Larke L."/>
            <person name="Murphy L.D."/>
            <person name="Oliver K."/>
            <person name="O'Neil S."/>
            <person name="Rabbinowitsch E."/>
            <person name="Rajandream M.A."/>
            <person name="Rutherford K.M."/>
            <person name="Rutter S."/>
            <person name="Seeger K."/>
            <person name="Saunders D."/>
            <person name="Sharp S."/>
            <person name="Squares R."/>
            <person name="Squares S."/>
            <person name="Taylor K."/>
            <person name="Warren T."/>
            <person name="Wietzorrek A."/>
            <person name="Woodward J.R."/>
            <person name="Barrell B.G."/>
            <person name="Parkhill J."/>
            <person name="Hopwood D.A."/>
        </authorList>
    </citation>
    <scope>NUCLEOTIDE SEQUENCE [LARGE SCALE GENOMIC DNA]</scope>
    <source>
        <strain>ATCC BAA-471 / A3(2) / M145</strain>
    </source>
</reference>
<feature type="chain" id="PRO_0000205350" description="Uncharacterized protein SCO4090">
    <location>
        <begin position="1"/>
        <end position="283"/>
    </location>
</feature>
<feature type="sequence conflict" description="In Ref. 1; AAA71982." evidence="1" ref="1">
    <original>N</original>
    <variation>TDV</variation>
    <location>
        <position position="283"/>
    </location>
</feature>
<protein>
    <recommendedName>
        <fullName>Uncharacterized protein SCO4090</fullName>
    </recommendedName>
</protein>
<evidence type="ECO:0000305" key="1"/>
<name>Y4090_STRCO</name>
<accession>Q06542</accession>
<accession>Q9RKJ6</accession>
<gene>
    <name type="ordered locus">SCO4090</name>
    <name type="ORF">SCD25.26</name>
</gene>
<dbReference type="EMBL" id="L13455">
    <property type="protein sequence ID" value="AAA71982.2"/>
    <property type="molecule type" value="Genomic_DNA"/>
</dbReference>
<dbReference type="EMBL" id="AL939118">
    <property type="protein sequence ID" value="CAB56370.1"/>
    <property type="molecule type" value="Genomic_DNA"/>
</dbReference>
<dbReference type="PIR" id="A40657">
    <property type="entry name" value="A40657"/>
</dbReference>
<dbReference type="RefSeq" id="NP_628271.1">
    <property type="nucleotide sequence ID" value="NC_003888.3"/>
</dbReference>
<dbReference type="RefSeq" id="WP_003974882.1">
    <property type="nucleotide sequence ID" value="NZ_VNID01000030.1"/>
</dbReference>
<dbReference type="STRING" id="100226.gene:17761725"/>
<dbReference type="PaxDb" id="100226-SCO4090"/>
<dbReference type="KEGG" id="sco:SCO4090"/>
<dbReference type="PATRIC" id="fig|100226.15.peg.4149"/>
<dbReference type="eggNOG" id="ENOG5032IA4">
    <property type="taxonomic scope" value="Bacteria"/>
</dbReference>
<dbReference type="HOGENOM" id="CLU_929534_0_0_11"/>
<dbReference type="InParanoid" id="Q06542"/>
<dbReference type="OrthoDB" id="4961314at2"/>
<dbReference type="Proteomes" id="UP000001973">
    <property type="component" value="Chromosome"/>
</dbReference>
<keyword id="KW-1185">Reference proteome</keyword>
<proteinExistence type="predicted"/>
<organism>
    <name type="scientific">Streptomyces coelicolor (strain ATCC BAA-471 / A3(2) / M145)</name>
    <dbReference type="NCBI Taxonomy" id="100226"/>
    <lineage>
        <taxon>Bacteria</taxon>
        <taxon>Bacillati</taxon>
        <taxon>Actinomycetota</taxon>
        <taxon>Actinomycetes</taxon>
        <taxon>Kitasatosporales</taxon>
        <taxon>Streptomycetaceae</taxon>
        <taxon>Streptomyces</taxon>
        <taxon>Streptomyces albidoflavus group</taxon>
    </lineage>
</organism>